<dbReference type="EC" id="6.1.1.20" evidence="1"/>
<dbReference type="EMBL" id="CP001127">
    <property type="protein sequence ID" value="ACF92390.1"/>
    <property type="molecule type" value="Genomic_DNA"/>
</dbReference>
<dbReference type="RefSeq" id="WP_000018570.1">
    <property type="nucleotide sequence ID" value="NC_011094.1"/>
</dbReference>
<dbReference type="SMR" id="B4TUF4"/>
<dbReference type="KEGG" id="sew:SeSA_A1432"/>
<dbReference type="HOGENOM" id="CLU_025086_0_1_6"/>
<dbReference type="Proteomes" id="UP000001865">
    <property type="component" value="Chromosome"/>
</dbReference>
<dbReference type="GO" id="GO:0005737">
    <property type="term" value="C:cytoplasm"/>
    <property type="evidence" value="ECO:0007669"/>
    <property type="project" value="UniProtKB-SubCell"/>
</dbReference>
<dbReference type="GO" id="GO:0005524">
    <property type="term" value="F:ATP binding"/>
    <property type="evidence" value="ECO:0007669"/>
    <property type="project" value="UniProtKB-UniRule"/>
</dbReference>
<dbReference type="GO" id="GO:0000287">
    <property type="term" value="F:magnesium ion binding"/>
    <property type="evidence" value="ECO:0007669"/>
    <property type="project" value="UniProtKB-UniRule"/>
</dbReference>
<dbReference type="GO" id="GO:0004826">
    <property type="term" value="F:phenylalanine-tRNA ligase activity"/>
    <property type="evidence" value="ECO:0007669"/>
    <property type="project" value="UniProtKB-UniRule"/>
</dbReference>
<dbReference type="GO" id="GO:0000049">
    <property type="term" value="F:tRNA binding"/>
    <property type="evidence" value="ECO:0007669"/>
    <property type="project" value="InterPro"/>
</dbReference>
<dbReference type="GO" id="GO:0006432">
    <property type="term" value="P:phenylalanyl-tRNA aminoacylation"/>
    <property type="evidence" value="ECO:0007669"/>
    <property type="project" value="UniProtKB-UniRule"/>
</dbReference>
<dbReference type="CDD" id="cd00496">
    <property type="entry name" value="PheRS_alpha_core"/>
    <property type="match status" value="1"/>
</dbReference>
<dbReference type="FunFam" id="3.30.930.10:FF:000003">
    <property type="entry name" value="Phenylalanine--tRNA ligase alpha subunit"/>
    <property type="match status" value="1"/>
</dbReference>
<dbReference type="Gene3D" id="3.30.930.10">
    <property type="entry name" value="Bira Bifunctional Protein, Domain 2"/>
    <property type="match status" value="1"/>
</dbReference>
<dbReference type="HAMAP" id="MF_00281">
    <property type="entry name" value="Phe_tRNA_synth_alpha1"/>
    <property type="match status" value="1"/>
</dbReference>
<dbReference type="InterPro" id="IPR006195">
    <property type="entry name" value="aa-tRNA-synth_II"/>
</dbReference>
<dbReference type="InterPro" id="IPR045864">
    <property type="entry name" value="aa-tRNA-synth_II/BPL/LPL"/>
</dbReference>
<dbReference type="InterPro" id="IPR004529">
    <property type="entry name" value="Phe-tRNA-synth_IIc_asu"/>
</dbReference>
<dbReference type="InterPro" id="IPR004188">
    <property type="entry name" value="Phe-tRNA_ligase_II_N"/>
</dbReference>
<dbReference type="InterPro" id="IPR022911">
    <property type="entry name" value="Phe_tRNA_ligase_alpha1_bac"/>
</dbReference>
<dbReference type="InterPro" id="IPR002319">
    <property type="entry name" value="Phenylalanyl-tRNA_Synthase"/>
</dbReference>
<dbReference type="InterPro" id="IPR010978">
    <property type="entry name" value="tRNA-bd_arm"/>
</dbReference>
<dbReference type="NCBIfam" id="TIGR00468">
    <property type="entry name" value="pheS"/>
    <property type="match status" value="1"/>
</dbReference>
<dbReference type="PANTHER" id="PTHR11538:SF41">
    <property type="entry name" value="PHENYLALANINE--TRNA LIGASE, MITOCHONDRIAL"/>
    <property type="match status" value="1"/>
</dbReference>
<dbReference type="PANTHER" id="PTHR11538">
    <property type="entry name" value="PHENYLALANYL-TRNA SYNTHETASE"/>
    <property type="match status" value="1"/>
</dbReference>
<dbReference type="Pfam" id="PF02912">
    <property type="entry name" value="Phe_tRNA-synt_N"/>
    <property type="match status" value="1"/>
</dbReference>
<dbReference type="Pfam" id="PF01409">
    <property type="entry name" value="tRNA-synt_2d"/>
    <property type="match status" value="1"/>
</dbReference>
<dbReference type="SUPFAM" id="SSF55681">
    <property type="entry name" value="Class II aaRS and biotin synthetases"/>
    <property type="match status" value="1"/>
</dbReference>
<dbReference type="SUPFAM" id="SSF46589">
    <property type="entry name" value="tRNA-binding arm"/>
    <property type="match status" value="1"/>
</dbReference>
<dbReference type="PROSITE" id="PS50862">
    <property type="entry name" value="AA_TRNA_LIGASE_II"/>
    <property type="match status" value="1"/>
</dbReference>
<reference key="1">
    <citation type="journal article" date="2011" name="J. Bacteriol.">
        <title>Comparative genomics of 28 Salmonella enterica isolates: evidence for CRISPR-mediated adaptive sublineage evolution.</title>
        <authorList>
            <person name="Fricke W.F."/>
            <person name="Mammel M.K."/>
            <person name="McDermott P.F."/>
            <person name="Tartera C."/>
            <person name="White D.G."/>
            <person name="Leclerc J.E."/>
            <person name="Ravel J."/>
            <person name="Cebula T.A."/>
        </authorList>
    </citation>
    <scope>NUCLEOTIDE SEQUENCE [LARGE SCALE GENOMIC DNA]</scope>
    <source>
        <strain>CVM19633</strain>
    </source>
</reference>
<accession>B4TUF4</accession>
<feature type="chain" id="PRO_1000114915" description="Phenylalanine--tRNA ligase alpha subunit">
    <location>
        <begin position="1"/>
        <end position="327"/>
    </location>
</feature>
<feature type="binding site" evidence="1">
    <location>
        <position position="252"/>
    </location>
    <ligand>
        <name>Mg(2+)</name>
        <dbReference type="ChEBI" id="CHEBI:18420"/>
        <note>shared with beta subunit</note>
    </ligand>
</feature>
<name>SYFA_SALSV</name>
<protein>
    <recommendedName>
        <fullName evidence="1">Phenylalanine--tRNA ligase alpha subunit</fullName>
        <ecNumber evidence="1">6.1.1.20</ecNumber>
    </recommendedName>
    <alternativeName>
        <fullName evidence="1">Phenylalanyl-tRNA synthetase alpha subunit</fullName>
        <shortName evidence="1">PheRS</shortName>
    </alternativeName>
</protein>
<evidence type="ECO:0000255" key="1">
    <source>
        <dbReference type="HAMAP-Rule" id="MF_00281"/>
    </source>
</evidence>
<organism>
    <name type="scientific">Salmonella schwarzengrund (strain CVM19633)</name>
    <dbReference type="NCBI Taxonomy" id="439843"/>
    <lineage>
        <taxon>Bacteria</taxon>
        <taxon>Pseudomonadati</taxon>
        <taxon>Pseudomonadota</taxon>
        <taxon>Gammaproteobacteria</taxon>
        <taxon>Enterobacterales</taxon>
        <taxon>Enterobacteriaceae</taxon>
        <taxon>Salmonella</taxon>
    </lineage>
</organism>
<comment type="catalytic activity">
    <reaction evidence="1">
        <text>tRNA(Phe) + L-phenylalanine + ATP = L-phenylalanyl-tRNA(Phe) + AMP + diphosphate + H(+)</text>
        <dbReference type="Rhea" id="RHEA:19413"/>
        <dbReference type="Rhea" id="RHEA-COMP:9668"/>
        <dbReference type="Rhea" id="RHEA-COMP:9699"/>
        <dbReference type="ChEBI" id="CHEBI:15378"/>
        <dbReference type="ChEBI" id="CHEBI:30616"/>
        <dbReference type="ChEBI" id="CHEBI:33019"/>
        <dbReference type="ChEBI" id="CHEBI:58095"/>
        <dbReference type="ChEBI" id="CHEBI:78442"/>
        <dbReference type="ChEBI" id="CHEBI:78531"/>
        <dbReference type="ChEBI" id="CHEBI:456215"/>
        <dbReference type="EC" id="6.1.1.20"/>
    </reaction>
</comment>
<comment type="cofactor">
    <cofactor evidence="1">
        <name>Mg(2+)</name>
        <dbReference type="ChEBI" id="CHEBI:18420"/>
    </cofactor>
    <text evidence="1">Binds 2 magnesium ions per tetramer.</text>
</comment>
<comment type="subunit">
    <text evidence="1">Tetramer of two alpha and two beta subunits.</text>
</comment>
<comment type="subcellular location">
    <subcellularLocation>
        <location evidence="1">Cytoplasm</location>
    </subcellularLocation>
</comment>
<comment type="similarity">
    <text evidence="1">Belongs to the class-II aminoacyl-tRNA synthetase family. Phe-tRNA synthetase alpha subunit type 1 subfamily.</text>
</comment>
<gene>
    <name evidence="1" type="primary">pheS</name>
    <name type="ordered locus">SeSA_A1432</name>
</gene>
<sequence>MSHLAELVANAAAAINQASDVAALDNVRVEYLGKKGHLTLQMTTLRDLPPEERPAAGAVINAAKEQVQQALNARKAELESAALNARLAAETIDISLPGRRIENGGLHPVTRTIDRIESFFGELGFTVATGPEIEDDYHNFDALNIPGHHPARADHDTFWFDATRLLRTQTSGVQIRTMKAQQPPIRIIAPGRVYRNDYDQTHTPMFHQMEGLIVDTNISFTNLKGTLHDFLRNFFEEDLQIRFRPSYFPFTEPSAEVDVMGKNGKWLEVLGCGMVHPNVLRNVGIDPEIYSGFAFGMGMERLTMLRYGVTDLRSFFENDLRFLKQFK</sequence>
<proteinExistence type="inferred from homology"/>
<keyword id="KW-0030">Aminoacyl-tRNA synthetase</keyword>
<keyword id="KW-0067">ATP-binding</keyword>
<keyword id="KW-0963">Cytoplasm</keyword>
<keyword id="KW-0436">Ligase</keyword>
<keyword id="KW-0460">Magnesium</keyword>
<keyword id="KW-0479">Metal-binding</keyword>
<keyword id="KW-0547">Nucleotide-binding</keyword>
<keyword id="KW-0648">Protein biosynthesis</keyword>